<comment type="similarity">
    <text evidence="1">Belongs to the UPF0301 (AlgH) family.</text>
</comment>
<evidence type="ECO:0000255" key="1">
    <source>
        <dbReference type="HAMAP-Rule" id="MF_00758"/>
    </source>
</evidence>
<keyword id="KW-1185">Reference proteome</keyword>
<gene>
    <name type="ordered locus">PSPTO_5037</name>
</gene>
<feature type="chain" id="PRO_0000214338" description="UPF0301 protein PSPTO_5037">
    <location>
        <begin position="1"/>
        <end position="190"/>
    </location>
</feature>
<protein>
    <recommendedName>
        <fullName evidence="1">UPF0301 protein PSPTO_5037</fullName>
    </recommendedName>
</protein>
<accession>Q87VA2</accession>
<organism>
    <name type="scientific">Pseudomonas syringae pv. tomato (strain ATCC BAA-871 / DC3000)</name>
    <dbReference type="NCBI Taxonomy" id="223283"/>
    <lineage>
        <taxon>Bacteria</taxon>
        <taxon>Pseudomonadati</taxon>
        <taxon>Pseudomonadota</taxon>
        <taxon>Gammaproteobacteria</taxon>
        <taxon>Pseudomonadales</taxon>
        <taxon>Pseudomonadaceae</taxon>
        <taxon>Pseudomonas</taxon>
    </lineage>
</organism>
<name>Y5037_PSESM</name>
<dbReference type="EMBL" id="AE016853">
    <property type="protein sequence ID" value="AAO58465.1"/>
    <property type="molecule type" value="Genomic_DNA"/>
</dbReference>
<dbReference type="RefSeq" id="NP_794770.1">
    <property type="nucleotide sequence ID" value="NC_004578.1"/>
</dbReference>
<dbReference type="RefSeq" id="WP_005769417.1">
    <property type="nucleotide sequence ID" value="NC_004578.1"/>
</dbReference>
<dbReference type="SMR" id="Q87VA2"/>
<dbReference type="STRING" id="223283.PSPTO_5037"/>
<dbReference type="GeneID" id="1186722"/>
<dbReference type="KEGG" id="pst:PSPTO_5037"/>
<dbReference type="PATRIC" id="fig|223283.9.peg.5156"/>
<dbReference type="eggNOG" id="COG1678">
    <property type="taxonomic scope" value="Bacteria"/>
</dbReference>
<dbReference type="HOGENOM" id="CLU_057596_1_0_6"/>
<dbReference type="OrthoDB" id="9807486at2"/>
<dbReference type="PhylomeDB" id="Q87VA2"/>
<dbReference type="Proteomes" id="UP000002515">
    <property type="component" value="Chromosome"/>
</dbReference>
<dbReference type="GO" id="GO:0005829">
    <property type="term" value="C:cytosol"/>
    <property type="evidence" value="ECO:0007669"/>
    <property type="project" value="TreeGrafter"/>
</dbReference>
<dbReference type="Gene3D" id="3.40.1740.10">
    <property type="entry name" value="VC0467-like"/>
    <property type="match status" value="1"/>
</dbReference>
<dbReference type="HAMAP" id="MF_00758">
    <property type="entry name" value="UPF0301"/>
    <property type="match status" value="1"/>
</dbReference>
<dbReference type="InterPro" id="IPR003774">
    <property type="entry name" value="AlgH-like"/>
</dbReference>
<dbReference type="NCBIfam" id="NF001266">
    <property type="entry name" value="PRK00228.1-1"/>
    <property type="match status" value="1"/>
</dbReference>
<dbReference type="PANTHER" id="PTHR30327">
    <property type="entry name" value="UNCHARACTERIZED PROTEIN YQGE"/>
    <property type="match status" value="1"/>
</dbReference>
<dbReference type="PANTHER" id="PTHR30327:SF1">
    <property type="entry name" value="UPF0301 PROTEIN YQGE"/>
    <property type="match status" value="1"/>
</dbReference>
<dbReference type="Pfam" id="PF02622">
    <property type="entry name" value="DUF179"/>
    <property type="match status" value="1"/>
</dbReference>
<dbReference type="SUPFAM" id="SSF143456">
    <property type="entry name" value="VC0467-like"/>
    <property type="match status" value="1"/>
</dbReference>
<proteinExistence type="inferred from homology"/>
<reference key="1">
    <citation type="journal article" date="2003" name="Proc. Natl. Acad. Sci. U.S.A.">
        <title>The complete genome sequence of the Arabidopsis and tomato pathogen Pseudomonas syringae pv. tomato DC3000.</title>
        <authorList>
            <person name="Buell C.R."/>
            <person name="Joardar V."/>
            <person name="Lindeberg M."/>
            <person name="Selengut J."/>
            <person name="Paulsen I.T."/>
            <person name="Gwinn M.L."/>
            <person name="Dodson R.J."/>
            <person name="DeBoy R.T."/>
            <person name="Durkin A.S."/>
            <person name="Kolonay J.F."/>
            <person name="Madupu R."/>
            <person name="Daugherty S.C."/>
            <person name="Brinkac L.M."/>
            <person name="Beanan M.J."/>
            <person name="Haft D.H."/>
            <person name="Nelson W.C."/>
            <person name="Davidsen T.M."/>
            <person name="Zafar N."/>
            <person name="Zhou L."/>
            <person name="Liu J."/>
            <person name="Yuan Q."/>
            <person name="Khouri H.M."/>
            <person name="Fedorova N.B."/>
            <person name="Tran B."/>
            <person name="Russell D."/>
            <person name="Berry K.J."/>
            <person name="Utterback T.R."/>
            <person name="Van Aken S.E."/>
            <person name="Feldblyum T.V."/>
            <person name="D'Ascenzo M."/>
            <person name="Deng W.-L."/>
            <person name="Ramos A.R."/>
            <person name="Alfano J.R."/>
            <person name="Cartinhour S."/>
            <person name="Chatterjee A.K."/>
            <person name="Delaney T.P."/>
            <person name="Lazarowitz S.G."/>
            <person name="Martin G.B."/>
            <person name="Schneider D.J."/>
            <person name="Tang X."/>
            <person name="Bender C.L."/>
            <person name="White O."/>
            <person name="Fraser C.M."/>
            <person name="Collmer A."/>
        </authorList>
    </citation>
    <scope>NUCLEOTIDE SEQUENCE [LARGE SCALE GENOMIC DNA]</scope>
    <source>
        <strain>ATCC BAA-871 / DC3000</strain>
    </source>
</reference>
<sequence length="190" mass="20522">MKKVSPSYLKHQFLIAMPHMHDENFAQTLTYVVEHNANGAMGLVINRPQSLTLADVLEQLRPELPAPKRCQEIAIHAGGPVQTDRGFVLHPSGQTFQATVDLPGGISLSTSQDVLFSIADGYGPDQNVITLGYAGWDAGQLDAEMADNAWLTCSFDPAILFDVDSDQRLDAAARRLGINLALISTQAGHA</sequence>